<protein>
    <recommendedName>
        <fullName evidence="1">Homoserine O-acetyltransferase</fullName>
        <shortName evidence="1">HAT</shortName>
        <ecNumber evidence="1">2.3.1.31</ecNumber>
    </recommendedName>
    <alternativeName>
        <fullName evidence="1">Homoserine transacetylase</fullName>
        <shortName evidence="1">HTA</shortName>
    </alternativeName>
</protein>
<keyword id="KW-0012">Acyltransferase</keyword>
<keyword id="KW-0028">Amino-acid biosynthesis</keyword>
<keyword id="KW-0963">Cytoplasm</keyword>
<keyword id="KW-0486">Methionine biosynthesis</keyword>
<keyword id="KW-0808">Transferase</keyword>
<reference key="1">
    <citation type="journal article" date="2008" name="PLoS ONE">
        <title>Genome sequence of the saprophyte Leptospira biflexa provides insights into the evolution of Leptospira and the pathogenesis of leptospirosis.</title>
        <authorList>
            <person name="Picardeau M."/>
            <person name="Bulach D.M."/>
            <person name="Bouchier C."/>
            <person name="Zuerner R.L."/>
            <person name="Zidane N."/>
            <person name="Wilson P.J."/>
            <person name="Creno S."/>
            <person name="Kuczek E.S."/>
            <person name="Bommezzadri S."/>
            <person name="Davis J.C."/>
            <person name="McGrath A."/>
            <person name="Johnson M.J."/>
            <person name="Boursaux-Eude C."/>
            <person name="Seemann T."/>
            <person name="Rouy Z."/>
            <person name="Coppel R.L."/>
            <person name="Rood J.I."/>
            <person name="Lajus A."/>
            <person name="Davies J.K."/>
            <person name="Medigue C."/>
            <person name="Adler B."/>
        </authorList>
    </citation>
    <scope>NUCLEOTIDE SEQUENCE [LARGE SCALE GENOMIC DNA]</scope>
    <source>
        <strain>Patoc 1 / Ames</strain>
    </source>
</reference>
<dbReference type="EC" id="2.3.1.31" evidence="1"/>
<dbReference type="EMBL" id="CP000777">
    <property type="protein sequence ID" value="ABZ94051.1"/>
    <property type="molecule type" value="Genomic_DNA"/>
</dbReference>
<dbReference type="RefSeq" id="WP_012388577.1">
    <property type="nucleotide sequence ID" value="NC_010842.1"/>
</dbReference>
<dbReference type="SMR" id="B0SHJ0"/>
<dbReference type="ESTHER" id="lepba-metx">
    <property type="family name" value="Homoserine_transacetylase"/>
</dbReference>
<dbReference type="KEGG" id="lbf:LBF_1541"/>
<dbReference type="HOGENOM" id="CLU_028760_1_2_12"/>
<dbReference type="UniPathway" id="UPA00051">
    <property type="reaction ID" value="UER00074"/>
</dbReference>
<dbReference type="GO" id="GO:0005737">
    <property type="term" value="C:cytoplasm"/>
    <property type="evidence" value="ECO:0007669"/>
    <property type="project" value="UniProtKB-SubCell"/>
</dbReference>
<dbReference type="GO" id="GO:0004414">
    <property type="term" value="F:homoserine O-acetyltransferase activity"/>
    <property type="evidence" value="ECO:0007669"/>
    <property type="project" value="UniProtKB-UniRule"/>
</dbReference>
<dbReference type="GO" id="GO:0009092">
    <property type="term" value="P:homoserine metabolic process"/>
    <property type="evidence" value="ECO:0007669"/>
    <property type="project" value="TreeGrafter"/>
</dbReference>
<dbReference type="GO" id="GO:0009086">
    <property type="term" value="P:methionine biosynthetic process"/>
    <property type="evidence" value="ECO:0007669"/>
    <property type="project" value="UniProtKB-UniRule"/>
</dbReference>
<dbReference type="FunFam" id="1.10.1740.110:FF:000001">
    <property type="entry name" value="Homoserine O-acetyltransferase"/>
    <property type="match status" value="1"/>
</dbReference>
<dbReference type="Gene3D" id="1.10.1740.110">
    <property type="match status" value="1"/>
</dbReference>
<dbReference type="Gene3D" id="3.40.50.1820">
    <property type="entry name" value="alpha/beta hydrolase"/>
    <property type="match status" value="1"/>
</dbReference>
<dbReference type="HAMAP" id="MF_00296">
    <property type="entry name" value="MetX_acyltransf"/>
    <property type="match status" value="1"/>
</dbReference>
<dbReference type="InterPro" id="IPR000073">
    <property type="entry name" value="AB_hydrolase_1"/>
</dbReference>
<dbReference type="InterPro" id="IPR029058">
    <property type="entry name" value="AB_hydrolase_fold"/>
</dbReference>
<dbReference type="InterPro" id="IPR008220">
    <property type="entry name" value="HAT_MetX-like"/>
</dbReference>
<dbReference type="NCBIfam" id="TIGR01392">
    <property type="entry name" value="homoserO_Ac_trn"/>
    <property type="match status" value="1"/>
</dbReference>
<dbReference type="NCBIfam" id="NF001209">
    <property type="entry name" value="PRK00175.1"/>
    <property type="match status" value="1"/>
</dbReference>
<dbReference type="PANTHER" id="PTHR32268">
    <property type="entry name" value="HOMOSERINE O-ACETYLTRANSFERASE"/>
    <property type="match status" value="1"/>
</dbReference>
<dbReference type="PANTHER" id="PTHR32268:SF11">
    <property type="entry name" value="HOMOSERINE O-ACETYLTRANSFERASE"/>
    <property type="match status" value="1"/>
</dbReference>
<dbReference type="Pfam" id="PF00561">
    <property type="entry name" value="Abhydrolase_1"/>
    <property type="match status" value="1"/>
</dbReference>
<dbReference type="PIRSF" id="PIRSF000443">
    <property type="entry name" value="Homoser_Ac_trans"/>
    <property type="match status" value="1"/>
</dbReference>
<dbReference type="SUPFAM" id="SSF53474">
    <property type="entry name" value="alpha/beta-Hydrolases"/>
    <property type="match status" value="1"/>
</dbReference>
<accession>B0SHJ0</accession>
<sequence>MPTSEPNDFFHGSVGIVQTQVATFDSLTLEGGETITPLEIAYETYGTLNQKKDNAILVCHALSGDAHAAGFHEGDKRPGWWDYYIGPGKAFDTNRYFIISSNVIGGCKGSSGPLSTNGNTGKPFQSTFPFVSIGDMVNAQEKLIRHFGIHKLFAVAGGSMGGMQALQWSVAYPDRLKNCIVMASSSEHSAQQIAFNEVGRQAILSDPNWNQGLYTQEKRPSKGLALARMMGHITYLSDEMMREKFGRKPPKGNIQSTDFAVGSYLIYQGESFVDRFDANSYIYVTKALDHFSLGTGKELTKVLSKVRCRFLVIAYTSDWLYPPYQSEEIVKSLEVNAVPVSFIELNNPAGHDSFLLPSEEQDSILRDFLSATDEGGFF</sequence>
<feature type="chain" id="PRO_1000115227" description="Homoserine O-acetyltransferase">
    <location>
        <begin position="1"/>
        <end position="378"/>
    </location>
</feature>
<feature type="domain" description="AB hydrolase-1" evidence="1">
    <location>
        <begin position="54"/>
        <end position="355"/>
    </location>
</feature>
<feature type="active site" description="Nucleophile" evidence="1">
    <location>
        <position position="159"/>
    </location>
</feature>
<feature type="active site" evidence="1">
    <location>
        <position position="318"/>
    </location>
</feature>
<feature type="active site" evidence="1">
    <location>
        <position position="351"/>
    </location>
</feature>
<feature type="binding site" evidence="1">
    <location>
        <position position="228"/>
    </location>
    <ligand>
        <name>substrate</name>
    </ligand>
</feature>
<feature type="binding site" evidence="1">
    <location>
        <position position="352"/>
    </location>
    <ligand>
        <name>substrate</name>
    </ligand>
</feature>
<name>METXA_LEPBA</name>
<proteinExistence type="inferred from homology"/>
<evidence type="ECO:0000255" key="1">
    <source>
        <dbReference type="HAMAP-Rule" id="MF_00296"/>
    </source>
</evidence>
<gene>
    <name evidence="1" type="primary">metXA</name>
    <name type="ordered locus">LBF_1541</name>
</gene>
<comment type="function">
    <text evidence="1">Transfers an acetyl group from acetyl-CoA to L-homoserine, forming acetyl-L-homoserine.</text>
</comment>
<comment type="catalytic activity">
    <reaction evidence="1">
        <text>L-homoserine + acetyl-CoA = O-acetyl-L-homoserine + CoA</text>
        <dbReference type="Rhea" id="RHEA:13701"/>
        <dbReference type="ChEBI" id="CHEBI:57287"/>
        <dbReference type="ChEBI" id="CHEBI:57288"/>
        <dbReference type="ChEBI" id="CHEBI:57476"/>
        <dbReference type="ChEBI" id="CHEBI:57716"/>
        <dbReference type="EC" id="2.3.1.31"/>
    </reaction>
</comment>
<comment type="pathway">
    <text evidence="1">Amino-acid biosynthesis; L-methionine biosynthesis via de novo pathway; O-acetyl-L-homoserine from L-homoserine: step 1/1.</text>
</comment>
<comment type="subunit">
    <text evidence="1">Homodimer.</text>
</comment>
<comment type="subcellular location">
    <subcellularLocation>
        <location evidence="1">Cytoplasm</location>
    </subcellularLocation>
</comment>
<comment type="similarity">
    <text evidence="1">Belongs to the AB hydrolase superfamily. MetX family.</text>
</comment>
<organism>
    <name type="scientific">Leptospira biflexa serovar Patoc (strain Patoc 1 / Ames)</name>
    <dbReference type="NCBI Taxonomy" id="355278"/>
    <lineage>
        <taxon>Bacteria</taxon>
        <taxon>Pseudomonadati</taxon>
        <taxon>Spirochaetota</taxon>
        <taxon>Spirochaetia</taxon>
        <taxon>Leptospirales</taxon>
        <taxon>Leptospiraceae</taxon>
        <taxon>Leptospira</taxon>
    </lineage>
</organism>